<accession>B1LKE5</accession>
<keyword id="KW-0030">Aminoacyl-tRNA synthetase</keyword>
<keyword id="KW-0067">ATP-binding</keyword>
<keyword id="KW-0963">Cytoplasm</keyword>
<keyword id="KW-0436">Ligase</keyword>
<keyword id="KW-0479">Metal-binding</keyword>
<keyword id="KW-0547">Nucleotide-binding</keyword>
<keyword id="KW-0648">Protein biosynthesis</keyword>
<keyword id="KW-0862">Zinc</keyword>
<gene>
    <name evidence="1" type="primary">cysS</name>
    <name type="ordered locus">EcSMS35_0571</name>
</gene>
<protein>
    <recommendedName>
        <fullName evidence="1">Cysteine--tRNA ligase</fullName>
        <ecNumber evidence="1">6.1.1.16</ecNumber>
    </recommendedName>
    <alternativeName>
        <fullName evidence="1">Cysteinyl-tRNA synthetase</fullName>
        <shortName evidence="1">CysRS</shortName>
    </alternativeName>
</protein>
<name>SYC_ECOSM</name>
<evidence type="ECO:0000255" key="1">
    <source>
        <dbReference type="HAMAP-Rule" id="MF_00041"/>
    </source>
</evidence>
<comment type="catalytic activity">
    <reaction evidence="1">
        <text>tRNA(Cys) + L-cysteine + ATP = L-cysteinyl-tRNA(Cys) + AMP + diphosphate</text>
        <dbReference type="Rhea" id="RHEA:17773"/>
        <dbReference type="Rhea" id="RHEA-COMP:9661"/>
        <dbReference type="Rhea" id="RHEA-COMP:9679"/>
        <dbReference type="ChEBI" id="CHEBI:30616"/>
        <dbReference type="ChEBI" id="CHEBI:33019"/>
        <dbReference type="ChEBI" id="CHEBI:35235"/>
        <dbReference type="ChEBI" id="CHEBI:78442"/>
        <dbReference type="ChEBI" id="CHEBI:78517"/>
        <dbReference type="ChEBI" id="CHEBI:456215"/>
        <dbReference type="EC" id="6.1.1.16"/>
    </reaction>
</comment>
<comment type="cofactor">
    <cofactor evidence="1">
        <name>Zn(2+)</name>
        <dbReference type="ChEBI" id="CHEBI:29105"/>
    </cofactor>
    <text evidence="1">Binds 1 zinc ion per subunit.</text>
</comment>
<comment type="subunit">
    <text evidence="1">Monomer.</text>
</comment>
<comment type="subcellular location">
    <subcellularLocation>
        <location evidence="1">Cytoplasm</location>
    </subcellularLocation>
</comment>
<comment type="similarity">
    <text evidence="1">Belongs to the class-I aminoacyl-tRNA synthetase family.</text>
</comment>
<dbReference type="EC" id="6.1.1.16" evidence="1"/>
<dbReference type="EMBL" id="CP000970">
    <property type="protein sequence ID" value="ACB19215.1"/>
    <property type="molecule type" value="Genomic_DNA"/>
</dbReference>
<dbReference type="RefSeq" id="WP_000912352.1">
    <property type="nucleotide sequence ID" value="NC_010498.1"/>
</dbReference>
<dbReference type="SMR" id="B1LKE5"/>
<dbReference type="GeneID" id="86945441"/>
<dbReference type="KEGG" id="ecm:EcSMS35_0571"/>
<dbReference type="HOGENOM" id="CLU_013528_0_1_6"/>
<dbReference type="Proteomes" id="UP000007011">
    <property type="component" value="Chromosome"/>
</dbReference>
<dbReference type="GO" id="GO:0005829">
    <property type="term" value="C:cytosol"/>
    <property type="evidence" value="ECO:0007669"/>
    <property type="project" value="TreeGrafter"/>
</dbReference>
<dbReference type="GO" id="GO:0005524">
    <property type="term" value="F:ATP binding"/>
    <property type="evidence" value="ECO:0007669"/>
    <property type="project" value="UniProtKB-UniRule"/>
</dbReference>
<dbReference type="GO" id="GO:0004817">
    <property type="term" value="F:cysteine-tRNA ligase activity"/>
    <property type="evidence" value="ECO:0007669"/>
    <property type="project" value="UniProtKB-UniRule"/>
</dbReference>
<dbReference type="GO" id="GO:0008270">
    <property type="term" value="F:zinc ion binding"/>
    <property type="evidence" value="ECO:0007669"/>
    <property type="project" value="UniProtKB-UniRule"/>
</dbReference>
<dbReference type="GO" id="GO:0006423">
    <property type="term" value="P:cysteinyl-tRNA aminoacylation"/>
    <property type="evidence" value="ECO:0007669"/>
    <property type="project" value="UniProtKB-UniRule"/>
</dbReference>
<dbReference type="CDD" id="cd07963">
    <property type="entry name" value="Anticodon_Ia_Cys"/>
    <property type="match status" value="1"/>
</dbReference>
<dbReference type="CDD" id="cd00672">
    <property type="entry name" value="CysRS_core"/>
    <property type="match status" value="1"/>
</dbReference>
<dbReference type="FunFam" id="1.20.120.1910:FF:000001">
    <property type="entry name" value="Cysteine--tRNA ligase"/>
    <property type="match status" value="1"/>
</dbReference>
<dbReference type="FunFam" id="3.40.50.620:FF:000009">
    <property type="entry name" value="Cysteine--tRNA ligase"/>
    <property type="match status" value="1"/>
</dbReference>
<dbReference type="Gene3D" id="1.20.120.1910">
    <property type="entry name" value="Cysteine-tRNA ligase, C-terminal anti-codon recognition domain"/>
    <property type="match status" value="1"/>
</dbReference>
<dbReference type="Gene3D" id="3.40.50.620">
    <property type="entry name" value="HUPs"/>
    <property type="match status" value="1"/>
</dbReference>
<dbReference type="HAMAP" id="MF_00041">
    <property type="entry name" value="Cys_tRNA_synth"/>
    <property type="match status" value="1"/>
</dbReference>
<dbReference type="InterPro" id="IPR015803">
    <property type="entry name" value="Cys-tRNA-ligase"/>
</dbReference>
<dbReference type="InterPro" id="IPR015273">
    <property type="entry name" value="Cys-tRNA-synt_Ia_DALR"/>
</dbReference>
<dbReference type="InterPro" id="IPR024909">
    <property type="entry name" value="Cys-tRNA/MSH_ligase"/>
</dbReference>
<dbReference type="InterPro" id="IPR056411">
    <property type="entry name" value="CysS_C"/>
</dbReference>
<dbReference type="InterPro" id="IPR014729">
    <property type="entry name" value="Rossmann-like_a/b/a_fold"/>
</dbReference>
<dbReference type="InterPro" id="IPR032678">
    <property type="entry name" value="tRNA-synt_1_cat_dom"/>
</dbReference>
<dbReference type="InterPro" id="IPR009080">
    <property type="entry name" value="tRNAsynth_Ia_anticodon-bd"/>
</dbReference>
<dbReference type="NCBIfam" id="TIGR00435">
    <property type="entry name" value="cysS"/>
    <property type="match status" value="1"/>
</dbReference>
<dbReference type="PANTHER" id="PTHR10890:SF3">
    <property type="entry name" value="CYSTEINE--TRNA LIGASE, CYTOPLASMIC"/>
    <property type="match status" value="1"/>
</dbReference>
<dbReference type="PANTHER" id="PTHR10890">
    <property type="entry name" value="CYSTEINYL-TRNA SYNTHETASE"/>
    <property type="match status" value="1"/>
</dbReference>
<dbReference type="Pfam" id="PF23493">
    <property type="entry name" value="CysS_C"/>
    <property type="match status" value="1"/>
</dbReference>
<dbReference type="Pfam" id="PF09190">
    <property type="entry name" value="DALR_2"/>
    <property type="match status" value="1"/>
</dbReference>
<dbReference type="Pfam" id="PF01406">
    <property type="entry name" value="tRNA-synt_1e"/>
    <property type="match status" value="1"/>
</dbReference>
<dbReference type="PRINTS" id="PR00983">
    <property type="entry name" value="TRNASYNTHCYS"/>
</dbReference>
<dbReference type="SMART" id="SM00840">
    <property type="entry name" value="DALR_2"/>
    <property type="match status" value="1"/>
</dbReference>
<dbReference type="SUPFAM" id="SSF47323">
    <property type="entry name" value="Anticodon-binding domain of a subclass of class I aminoacyl-tRNA synthetases"/>
    <property type="match status" value="1"/>
</dbReference>
<dbReference type="SUPFAM" id="SSF52374">
    <property type="entry name" value="Nucleotidylyl transferase"/>
    <property type="match status" value="1"/>
</dbReference>
<feature type="chain" id="PRO_1000199063" description="Cysteine--tRNA ligase">
    <location>
        <begin position="1"/>
        <end position="461"/>
    </location>
</feature>
<feature type="short sequence motif" description="'HIGH' region">
    <location>
        <begin position="30"/>
        <end position="40"/>
    </location>
</feature>
<feature type="short sequence motif" description="'KMSKS' region">
    <location>
        <begin position="266"/>
        <end position="270"/>
    </location>
</feature>
<feature type="binding site" evidence="1">
    <location>
        <position position="28"/>
    </location>
    <ligand>
        <name>Zn(2+)</name>
        <dbReference type="ChEBI" id="CHEBI:29105"/>
    </ligand>
</feature>
<feature type="binding site" evidence="1">
    <location>
        <position position="209"/>
    </location>
    <ligand>
        <name>Zn(2+)</name>
        <dbReference type="ChEBI" id="CHEBI:29105"/>
    </ligand>
</feature>
<feature type="binding site" evidence="1">
    <location>
        <position position="234"/>
    </location>
    <ligand>
        <name>Zn(2+)</name>
        <dbReference type="ChEBI" id="CHEBI:29105"/>
    </ligand>
</feature>
<feature type="binding site" evidence="1">
    <location>
        <position position="238"/>
    </location>
    <ligand>
        <name>Zn(2+)</name>
        <dbReference type="ChEBI" id="CHEBI:29105"/>
    </ligand>
</feature>
<feature type="binding site" evidence="1">
    <location>
        <position position="269"/>
    </location>
    <ligand>
        <name>ATP</name>
        <dbReference type="ChEBI" id="CHEBI:30616"/>
    </ligand>
</feature>
<proteinExistence type="inferred from homology"/>
<organism>
    <name type="scientific">Escherichia coli (strain SMS-3-5 / SECEC)</name>
    <dbReference type="NCBI Taxonomy" id="439855"/>
    <lineage>
        <taxon>Bacteria</taxon>
        <taxon>Pseudomonadati</taxon>
        <taxon>Pseudomonadota</taxon>
        <taxon>Gammaproteobacteria</taxon>
        <taxon>Enterobacterales</taxon>
        <taxon>Enterobacteriaceae</taxon>
        <taxon>Escherichia</taxon>
    </lineage>
</organism>
<sequence length="461" mass="52183">MLKIFNTLTRQKEEFKPIHAGEVGMYVCGITVYDLCHIGHGRTFVAFDVVARYLRFLGYKLKYVRNITDIDDKIIKRANENGESFVALVDRMIAEMHKDFDALNILRPDMEPRATHHIAEIIELTEQLIAKGHAYVADNGDVMFDVPTDPTYGVLSRQDLDQLQAGARVDVVDDKRNPMDFVLWKMSKEGEPSWPSPWGAGRPGWHIECSAMNCKQLGNHFDIHGGGSDLMFPHHENEIAQSTCAHDGQYVNYWMHSGMVMVDREKMSKSLGNFFTVRDVLKYYDAETVRYFLMSGHYRSQLNYSEENLKQARAALERLYTALRGTDKTVAPAGGEAFEARFIEAMNDDFNTPEAYSVLFDMAREVNRLKAEDMAAANAMASHLRKLSAVLGLLEQEPEAFLQSGAQADDSEVAEIEALIQQRLDARKAKDWAAADAARDRLNEMGIVLEDGPQGTTWRRK</sequence>
<reference key="1">
    <citation type="journal article" date="2008" name="J. Bacteriol.">
        <title>Insights into the environmental resistance gene pool from the genome sequence of the multidrug-resistant environmental isolate Escherichia coli SMS-3-5.</title>
        <authorList>
            <person name="Fricke W.F."/>
            <person name="Wright M.S."/>
            <person name="Lindell A.H."/>
            <person name="Harkins D.M."/>
            <person name="Baker-Austin C."/>
            <person name="Ravel J."/>
            <person name="Stepanauskas R."/>
        </authorList>
    </citation>
    <scope>NUCLEOTIDE SEQUENCE [LARGE SCALE GENOMIC DNA]</scope>
    <source>
        <strain>SMS-3-5 / SECEC</strain>
    </source>
</reference>